<comment type="function">
    <text evidence="1">Transfers the 4'-phosphopantetheine moiety from coenzyme A to a Ser of acyl-carrier-protein.</text>
</comment>
<comment type="catalytic activity">
    <reaction evidence="1">
        <text>apo-[ACP] + CoA = holo-[ACP] + adenosine 3',5'-bisphosphate + H(+)</text>
        <dbReference type="Rhea" id="RHEA:12068"/>
        <dbReference type="Rhea" id="RHEA-COMP:9685"/>
        <dbReference type="Rhea" id="RHEA-COMP:9690"/>
        <dbReference type="ChEBI" id="CHEBI:15378"/>
        <dbReference type="ChEBI" id="CHEBI:29999"/>
        <dbReference type="ChEBI" id="CHEBI:57287"/>
        <dbReference type="ChEBI" id="CHEBI:58343"/>
        <dbReference type="ChEBI" id="CHEBI:64479"/>
        <dbReference type="EC" id="2.7.8.7"/>
    </reaction>
</comment>
<comment type="cofactor">
    <cofactor evidence="1">
        <name>Mg(2+)</name>
        <dbReference type="ChEBI" id="CHEBI:18420"/>
    </cofactor>
</comment>
<comment type="subcellular location">
    <subcellularLocation>
        <location evidence="1">Cytoplasm</location>
    </subcellularLocation>
</comment>
<comment type="similarity">
    <text evidence="1">Belongs to the P-Pant transferase superfamily. AcpS family.</text>
</comment>
<reference key="1">
    <citation type="journal article" date="2009" name="PLoS ONE">
        <title>Salmonella paratyphi C: genetic divergence from Salmonella choleraesuis and pathogenic convergence with Salmonella typhi.</title>
        <authorList>
            <person name="Liu W.-Q."/>
            <person name="Feng Y."/>
            <person name="Wang Y."/>
            <person name="Zou Q.-H."/>
            <person name="Chen F."/>
            <person name="Guo J.-T."/>
            <person name="Peng Y.-H."/>
            <person name="Jin Y."/>
            <person name="Li Y.-G."/>
            <person name="Hu S.-N."/>
            <person name="Johnston R.N."/>
            <person name="Liu G.-R."/>
            <person name="Liu S.-L."/>
        </authorList>
    </citation>
    <scope>NUCLEOTIDE SEQUENCE [LARGE SCALE GENOMIC DNA]</scope>
    <source>
        <strain>RKS4594</strain>
    </source>
</reference>
<name>ACPS_SALPC</name>
<sequence>MAILGLGTDIVEIARIEAVISRSGERLARRVLSDNEWAIWESHQQPVRFLAKRFAVKEAAAKAFGTGIRNGLAFNQFEVFNDELGKPRLRLWGEALTLAEKLGVAHMHVTLADERHYACATVILES</sequence>
<gene>
    <name evidence="1" type="primary">acpS</name>
    <name type="ordered locus">SPC_1072</name>
</gene>
<proteinExistence type="inferred from homology"/>
<accession>C0PYH1</accession>
<organism>
    <name type="scientific">Salmonella paratyphi C (strain RKS4594)</name>
    <dbReference type="NCBI Taxonomy" id="476213"/>
    <lineage>
        <taxon>Bacteria</taxon>
        <taxon>Pseudomonadati</taxon>
        <taxon>Pseudomonadota</taxon>
        <taxon>Gammaproteobacteria</taxon>
        <taxon>Enterobacterales</taxon>
        <taxon>Enterobacteriaceae</taxon>
        <taxon>Salmonella</taxon>
    </lineage>
</organism>
<feature type="chain" id="PRO_1000118823" description="Holo-[acyl-carrier-protein] synthase">
    <location>
        <begin position="1"/>
        <end position="126"/>
    </location>
</feature>
<feature type="binding site" evidence="1">
    <location>
        <position position="9"/>
    </location>
    <ligand>
        <name>Mg(2+)</name>
        <dbReference type="ChEBI" id="CHEBI:18420"/>
    </ligand>
</feature>
<feature type="binding site" evidence="1">
    <location>
        <position position="58"/>
    </location>
    <ligand>
        <name>Mg(2+)</name>
        <dbReference type="ChEBI" id="CHEBI:18420"/>
    </ligand>
</feature>
<dbReference type="EC" id="2.7.8.7" evidence="1"/>
<dbReference type="EMBL" id="CP000857">
    <property type="protein sequence ID" value="ACN45238.1"/>
    <property type="molecule type" value="Genomic_DNA"/>
</dbReference>
<dbReference type="RefSeq" id="WP_000986041.1">
    <property type="nucleotide sequence ID" value="NC_012125.1"/>
</dbReference>
<dbReference type="SMR" id="C0PYH1"/>
<dbReference type="KEGG" id="sei:SPC_1072"/>
<dbReference type="HOGENOM" id="CLU_089696_3_1_6"/>
<dbReference type="Proteomes" id="UP000001599">
    <property type="component" value="Chromosome"/>
</dbReference>
<dbReference type="GO" id="GO:0005737">
    <property type="term" value="C:cytoplasm"/>
    <property type="evidence" value="ECO:0007669"/>
    <property type="project" value="UniProtKB-SubCell"/>
</dbReference>
<dbReference type="GO" id="GO:0008897">
    <property type="term" value="F:holo-[acyl-carrier-protein] synthase activity"/>
    <property type="evidence" value="ECO:0007669"/>
    <property type="project" value="UniProtKB-UniRule"/>
</dbReference>
<dbReference type="GO" id="GO:0000287">
    <property type="term" value="F:magnesium ion binding"/>
    <property type="evidence" value="ECO:0007669"/>
    <property type="project" value="UniProtKB-UniRule"/>
</dbReference>
<dbReference type="GO" id="GO:0006633">
    <property type="term" value="P:fatty acid biosynthetic process"/>
    <property type="evidence" value="ECO:0007669"/>
    <property type="project" value="UniProtKB-UniRule"/>
</dbReference>
<dbReference type="FunFam" id="3.90.470.20:FF:000001">
    <property type="entry name" value="Holo-[acyl-carrier-protein] synthase"/>
    <property type="match status" value="1"/>
</dbReference>
<dbReference type="Gene3D" id="3.90.470.20">
    <property type="entry name" value="4'-phosphopantetheinyl transferase domain"/>
    <property type="match status" value="1"/>
</dbReference>
<dbReference type="HAMAP" id="MF_00101">
    <property type="entry name" value="AcpS"/>
    <property type="match status" value="1"/>
</dbReference>
<dbReference type="InterPro" id="IPR008278">
    <property type="entry name" value="4-PPantetheinyl_Trfase_dom"/>
</dbReference>
<dbReference type="InterPro" id="IPR037143">
    <property type="entry name" value="4-PPantetheinyl_Trfase_dom_sf"/>
</dbReference>
<dbReference type="InterPro" id="IPR002582">
    <property type="entry name" value="ACPS"/>
</dbReference>
<dbReference type="InterPro" id="IPR004568">
    <property type="entry name" value="Ppantetheine-prot_Trfase_dom"/>
</dbReference>
<dbReference type="NCBIfam" id="TIGR00516">
    <property type="entry name" value="acpS"/>
    <property type="match status" value="1"/>
</dbReference>
<dbReference type="NCBIfam" id="TIGR00556">
    <property type="entry name" value="pantethn_trn"/>
    <property type="match status" value="1"/>
</dbReference>
<dbReference type="Pfam" id="PF01648">
    <property type="entry name" value="ACPS"/>
    <property type="match status" value="1"/>
</dbReference>
<dbReference type="SUPFAM" id="SSF56214">
    <property type="entry name" value="4'-phosphopantetheinyl transferase"/>
    <property type="match status" value="1"/>
</dbReference>
<protein>
    <recommendedName>
        <fullName evidence="1">Holo-[acyl-carrier-protein] synthase</fullName>
        <shortName evidence="1">Holo-ACP synthase</shortName>
        <ecNumber evidence="1">2.7.8.7</ecNumber>
    </recommendedName>
    <alternativeName>
        <fullName evidence="1">4'-phosphopantetheinyl transferase AcpS</fullName>
    </alternativeName>
</protein>
<keyword id="KW-0963">Cytoplasm</keyword>
<keyword id="KW-0275">Fatty acid biosynthesis</keyword>
<keyword id="KW-0276">Fatty acid metabolism</keyword>
<keyword id="KW-0444">Lipid biosynthesis</keyword>
<keyword id="KW-0443">Lipid metabolism</keyword>
<keyword id="KW-0460">Magnesium</keyword>
<keyword id="KW-0479">Metal-binding</keyword>
<keyword id="KW-0808">Transferase</keyword>
<evidence type="ECO:0000255" key="1">
    <source>
        <dbReference type="HAMAP-Rule" id="MF_00101"/>
    </source>
</evidence>